<proteinExistence type="inferred from homology"/>
<sequence length="515" mass="60970">MDEFHRYGKEDNSRQQCFLYPLFFQEDLYAISHDHYLDGSSSSEPTEHLSSNDQFSFLTVKRLIGQIRQQNHSIVLFVNCAPNPLADCKKSSYSESVLEGLTLVLEVPFSIRSKYSVEGMNEWKSFRSIHSIFPFLEDKFPHSNYISDARIPYSIHPEILVRTFRRLIRDAPSLHPLRSVLYEYRNSPENLQRSIIVVPRVNTRFFLFLWNYYVYECESILFSLLKRSSHSRSLSHRPFPQRTHFHRKIKHIIIFSRRNSLKSIWLLKDPKINYVRYGERSIIAIKGTHLLLKKCRYYLLLFRQCYFHLWSEPYRVCSHQLSKNCSSSPGYFLRVRMNPLFVRTKMLDELFIADLITNEFDPIVPIVPILGLLAREKFCDVSGRPISKLSWTNLTDDDILNRFDQIWRNLFHYYSGSFGRDGLYRIKYILSLSCAKTLACKHKSTIRVVRKELGPELFQKSFSKEREFDSLPFSSKAAARSQRERIWHSDIPQINPLVNSWQKIQDLKIENLFDQ</sequence>
<dbReference type="EMBL" id="AF143428">
    <property type="protein sequence ID" value="AAF69183.1"/>
    <property type="molecule type" value="Genomic_DNA"/>
</dbReference>
<dbReference type="GO" id="GO:0009507">
    <property type="term" value="C:chloroplast"/>
    <property type="evidence" value="ECO:0007669"/>
    <property type="project" value="UniProtKB-SubCell"/>
</dbReference>
<dbReference type="GO" id="GO:0003723">
    <property type="term" value="F:RNA binding"/>
    <property type="evidence" value="ECO:0007669"/>
    <property type="project" value="UniProtKB-KW"/>
</dbReference>
<dbReference type="GO" id="GO:0006397">
    <property type="term" value="P:mRNA processing"/>
    <property type="evidence" value="ECO:0007669"/>
    <property type="project" value="UniProtKB-KW"/>
</dbReference>
<dbReference type="GO" id="GO:0008380">
    <property type="term" value="P:RNA splicing"/>
    <property type="evidence" value="ECO:0007669"/>
    <property type="project" value="UniProtKB-UniRule"/>
</dbReference>
<dbReference type="GO" id="GO:0008033">
    <property type="term" value="P:tRNA processing"/>
    <property type="evidence" value="ECO:0007669"/>
    <property type="project" value="UniProtKB-KW"/>
</dbReference>
<dbReference type="HAMAP" id="MF_01390">
    <property type="entry name" value="MatK"/>
    <property type="match status" value="1"/>
</dbReference>
<dbReference type="InterPro" id="IPR024937">
    <property type="entry name" value="Domain_X"/>
</dbReference>
<dbReference type="InterPro" id="IPR002866">
    <property type="entry name" value="Maturase_MatK"/>
</dbReference>
<dbReference type="InterPro" id="IPR024942">
    <property type="entry name" value="Maturase_MatK_N"/>
</dbReference>
<dbReference type="PANTHER" id="PTHR34811">
    <property type="entry name" value="MATURASE K"/>
    <property type="match status" value="1"/>
</dbReference>
<dbReference type="PANTHER" id="PTHR34811:SF1">
    <property type="entry name" value="MATURASE K"/>
    <property type="match status" value="1"/>
</dbReference>
<dbReference type="Pfam" id="PF01348">
    <property type="entry name" value="Intron_maturas2"/>
    <property type="match status" value="1"/>
</dbReference>
<dbReference type="Pfam" id="PF01824">
    <property type="entry name" value="MatK_N"/>
    <property type="match status" value="1"/>
</dbReference>
<feature type="chain" id="PRO_0000143603" description="Maturase K">
    <location>
        <begin position="1"/>
        <end position="515"/>
    </location>
</feature>
<geneLocation type="chloroplast"/>
<comment type="function">
    <text evidence="1">Usually encoded in the trnK tRNA gene intron. Probably assists in splicing its own and other chloroplast group II introns.</text>
</comment>
<comment type="subcellular location">
    <subcellularLocation>
        <location>Plastid</location>
        <location>Chloroplast</location>
    </subcellularLocation>
</comment>
<comment type="similarity">
    <text evidence="1">Belongs to the intron maturase 2 family. MatK subfamily.</text>
</comment>
<organism>
    <name type="scientific">Pinus armandii</name>
    <name type="common">Chinese white pine</name>
    <dbReference type="NCBI Taxonomy" id="88733"/>
    <lineage>
        <taxon>Eukaryota</taxon>
        <taxon>Viridiplantae</taxon>
        <taxon>Streptophyta</taxon>
        <taxon>Embryophyta</taxon>
        <taxon>Tracheophyta</taxon>
        <taxon>Spermatophyta</taxon>
        <taxon>Pinopsida</taxon>
        <taxon>Pinidae</taxon>
        <taxon>Conifers I</taxon>
        <taxon>Pinales</taxon>
        <taxon>Pinaceae</taxon>
        <taxon>Pinus</taxon>
        <taxon>Pinus subgen. Strobus</taxon>
    </lineage>
</organism>
<protein>
    <recommendedName>
        <fullName evidence="1">Maturase K</fullName>
    </recommendedName>
    <alternativeName>
        <fullName evidence="1">Intron maturase</fullName>
    </alternativeName>
</protein>
<accession>Q9MV59</accession>
<gene>
    <name evidence="1" type="primary">matK</name>
</gene>
<reference key="1">
    <citation type="journal article" date="2000" name="Mol. Biol. Evol.">
        <title>Phylogeny and divergence times in Pinaceae: evidence from three genomes.</title>
        <authorList>
            <person name="Wang X.Q."/>
            <person name="Tank D.C."/>
            <person name="Sang T."/>
        </authorList>
    </citation>
    <scope>NUCLEOTIDE SEQUENCE [GENOMIC DNA]</scope>
</reference>
<keyword id="KW-0150">Chloroplast</keyword>
<keyword id="KW-0507">mRNA processing</keyword>
<keyword id="KW-0934">Plastid</keyword>
<keyword id="KW-0694">RNA-binding</keyword>
<keyword id="KW-0819">tRNA processing</keyword>
<name>MATK_PINAR</name>
<evidence type="ECO:0000255" key="1">
    <source>
        <dbReference type="HAMAP-Rule" id="MF_01390"/>
    </source>
</evidence>